<evidence type="ECO:0000255" key="1">
    <source>
        <dbReference type="HAMAP-Rule" id="MF_00048"/>
    </source>
</evidence>
<evidence type="ECO:0000256" key="2">
    <source>
        <dbReference type="SAM" id="MobiDB-lite"/>
    </source>
</evidence>
<sequence length="120" mass="13442">MQVKANDTTTARGREAEDRAARHLERGGLRVVERNFRIRGGEIDLICRDGKGLVFVEVRQRSRSDFGGAGASITAGKRRRIVLAAQHYLLGKPDCDCRFDCVLIDGEQLEWIKHAFSADD</sequence>
<organism>
    <name type="scientific">Dechloromonas aromatica (strain RCB)</name>
    <dbReference type="NCBI Taxonomy" id="159087"/>
    <lineage>
        <taxon>Bacteria</taxon>
        <taxon>Pseudomonadati</taxon>
        <taxon>Pseudomonadota</taxon>
        <taxon>Betaproteobacteria</taxon>
        <taxon>Rhodocyclales</taxon>
        <taxon>Azonexaceae</taxon>
        <taxon>Dechloromonas</taxon>
    </lineage>
</organism>
<dbReference type="EMBL" id="CP000089">
    <property type="protein sequence ID" value="AAZ45260.1"/>
    <property type="molecule type" value="Genomic_DNA"/>
</dbReference>
<dbReference type="SMR" id="Q47IS1"/>
<dbReference type="STRING" id="159087.Daro_0503"/>
<dbReference type="KEGG" id="dar:Daro_0503"/>
<dbReference type="eggNOG" id="COG0792">
    <property type="taxonomic scope" value="Bacteria"/>
</dbReference>
<dbReference type="HOGENOM" id="CLU_115353_1_0_4"/>
<dbReference type="OrthoDB" id="9794876at2"/>
<dbReference type="GO" id="GO:0003676">
    <property type="term" value="F:nucleic acid binding"/>
    <property type="evidence" value="ECO:0007669"/>
    <property type="project" value="InterPro"/>
</dbReference>
<dbReference type="CDD" id="cd20736">
    <property type="entry name" value="PoNe_Nuclease"/>
    <property type="match status" value="1"/>
</dbReference>
<dbReference type="Gene3D" id="3.40.1350.10">
    <property type="match status" value="1"/>
</dbReference>
<dbReference type="HAMAP" id="MF_00048">
    <property type="entry name" value="UPF0102"/>
    <property type="match status" value="1"/>
</dbReference>
<dbReference type="InterPro" id="IPR011335">
    <property type="entry name" value="Restrct_endonuc-II-like"/>
</dbReference>
<dbReference type="InterPro" id="IPR011856">
    <property type="entry name" value="tRNA_endonuc-like_dom_sf"/>
</dbReference>
<dbReference type="InterPro" id="IPR003509">
    <property type="entry name" value="UPF0102_YraN-like"/>
</dbReference>
<dbReference type="NCBIfam" id="NF009150">
    <property type="entry name" value="PRK12497.1-3"/>
    <property type="match status" value="1"/>
</dbReference>
<dbReference type="NCBIfam" id="TIGR00252">
    <property type="entry name" value="YraN family protein"/>
    <property type="match status" value="1"/>
</dbReference>
<dbReference type="PANTHER" id="PTHR34039">
    <property type="entry name" value="UPF0102 PROTEIN YRAN"/>
    <property type="match status" value="1"/>
</dbReference>
<dbReference type="PANTHER" id="PTHR34039:SF1">
    <property type="entry name" value="UPF0102 PROTEIN YRAN"/>
    <property type="match status" value="1"/>
</dbReference>
<dbReference type="Pfam" id="PF02021">
    <property type="entry name" value="UPF0102"/>
    <property type="match status" value="1"/>
</dbReference>
<dbReference type="SUPFAM" id="SSF52980">
    <property type="entry name" value="Restriction endonuclease-like"/>
    <property type="match status" value="1"/>
</dbReference>
<gene>
    <name type="ordered locus">Daro_0503</name>
</gene>
<proteinExistence type="inferred from homology"/>
<protein>
    <recommendedName>
        <fullName evidence="1">UPF0102 protein Daro_0503</fullName>
    </recommendedName>
</protein>
<feature type="chain" id="PRO_0000336166" description="UPF0102 protein Daro_0503">
    <location>
        <begin position="1"/>
        <end position="120"/>
    </location>
</feature>
<feature type="region of interest" description="Disordered" evidence="2">
    <location>
        <begin position="1"/>
        <end position="20"/>
    </location>
</feature>
<reference key="1">
    <citation type="journal article" date="2009" name="BMC Genomics">
        <title>Metabolic analysis of the soil microbe Dechloromonas aromatica str. RCB: indications of a surprisingly complex life-style and cryptic anaerobic pathways for aromatic degradation.</title>
        <authorList>
            <person name="Salinero K.K."/>
            <person name="Keller K."/>
            <person name="Feil W.S."/>
            <person name="Feil H."/>
            <person name="Trong S."/>
            <person name="Di Bartolo G."/>
            <person name="Lapidus A."/>
        </authorList>
    </citation>
    <scope>NUCLEOTIDE SEQUENCE [LARGE SCALE GENOMIC DNA]</scope>
    <source>
        <strain>RCB</strain>
    </source>
</reference>
<name>Y503_DECAR</name>
<comment type="similarity">
    <text evidence="1">Belongs to the UPF0102 family.</text>
</comment>
<accession>Q47IS1</accession>